<proteinExistence type="evidence at protein level"/>
<comment type="catalytic activity">
    <reaction>
        <text>L-glutamine + H2O = L-glutamate + NH4(+)</text>
        <dbReference type="Rhea" id="RHEA:15889"/>
        <dbReference type="ChEBI" id="CHEBI:15377"/>
        <dbReference type="ChEBI" id="CHEBI:28938"/>
        <dbReference type="ChEBI" id="CHEBI:29985"/>
        <dbReference type="ChEBI" id="CHEBI:58359"/>
        <dbReference type="EC" id="3.5.1.38"/>
    </reaction>
</comment>
<comment type="catalytic activity">
    <reaction>
        <text>L-asparagine + H2O = L-aspartate + NH4(+)</text>
        <dbReference type="Rhea" id="RHEA:21016"/>
        <dbReference type="ChEBI" id="CHEBI:15377"/>
        <dbReference type="ChEBI" id="CHEBI:28938"/>
        <dbReference type="ChEBI" id="CHEBI:29991"/>
        <dbReference type="ChEBI" id="CHEBI:58048"/>
        <dbReference type="EC" id="3.5.1.38"/>
    </reaction>
</comment>
<comment type="subunit">
    <text evidence="5">Homotetramer.</text>
</comment>
<comment type="subcellular location">
    <subcellularLocation>
        <location>Periplasm</location>
    </subcellularLocation>
</comment>
<comment type="similarity">
    <text evidence="6">Belongs to the asparaginase 1 family.</text>
</comment>
<gene>
    <name type="primary">ansB</name>
</gene>
<name>ASPQ_PSES7</name>
<reference key="1">
    <citation type="journal article" date="1994" name="Biochemistry">
        <title>Structural characterization of Pseudomonas 7A glutaminase-asparaginase.</title>
        <authorList>
            <person name="Lubkowski J."/>
            <person name="Wlodawer A."/>
            <person name="Ammon H.L."/>
            <person name="Copeland T.D."/>
            <person name="Swain A.L."/>
        </authorList>
    </citation>
    <scope>PROTEIN SEQUENCE</scope>
    <scope>X-RAY CRYSTALLOGRAPHY (2.0 ANGSTROMS)</scope>
</reference>
<reference key="2">
    <citation type="journal article" date="1978" name="Biochemistry">
        <title>Amino acid sequence of the diazooxonorleucine binding site of Acinetobacter and Pseudomonas 7A glutaminase-asparaginase enzymes.</title>
        <authorList>
            <person name="Holcenberg J.S."/>
            <person name="Ericsson L."/>
            <person name="Roberts J."/>
        </authorList>
    </citation>
    <scope>PROTEIN SEQUENCE OF 1-26</scope>
</reference>
<reference key="3">
    <citation type="journal article" date="1997" name="Biochemistry">
        <title>Ion binding induces closed conformation in Pseudomonas 7A glutaminase-asparaginase (PGA): crystal structure of the PGA-SO4(2-)-NH4+ complex at 1.7-A resolution.</title>
        <authorList>
            <person name="Jakob C.G."/>
            <person name="Lewinski K."/>
            <person name="Lacount M.W."/>
            <person name="Roberts J."/>
            <person name="Lebioda L."/>
        </authorList>
    </citation>
    <scope>X-RAY CRYSTALLOGRAPHY (1.7 ANGSTROMS)</scope>
</reference>
<reference key="4">
    <citation type="journal article" date="2000" name="Biochemistry">
        <title>Reactions of Pseudomonas 7A glutaminase-asparaginase with diazo analogues of glutamine and asparagine result in unexpected covalent inhibitions and suggests an unusual catalytic triad Thr-Tyr-Glu.</title>
        <authorList>
            <person name="Ortlund E."/>
            <person name="Lacount M.W."/>
            <person name="Lewinski K."/>
            <person name="Lebioda L."/>
        </authorList>
    </citation>
    <scope>X-RAY CRYSTALLOGRAPHY (1.9 ANGSTROMS) OF 8-337 IN COMPLEXES WITH 6-DIAZO-5-OXO-L-NORLEUCINE AND 5-DIAZO-4-OXO-L-NORVALINE</scope>
    <scope>ACTIVE SITE</scope>
    <scope>SUBUNIT</scope>
</reference>
<keyword id="KW-0002">3D-structure</keyword>
<keyword id="KW-0903">Direct protein sequencing</keyword>
<keyword id="KW-0378">Hydrolase</keyword>
<keyword id="KW-0574">Periplasm</keyword>
<sequence length="337" mass="36200">KEVENQQKLANVVILATGGTIAGAGASAANSATYQAAKVGVDKLIAGVPELADLANVRGEQVMQIASESITNDDLLKLGKRVAELADSNDVDGIVITHGTDTLEETAYFLDLTLNTDKPIVVVGSMRPGTAMSADGMLNLYNAVAVASNKDSRGKGVLVTMNDEIQSGRDVSKSINIKTEAFKSAWGPLGMVVEGKSYWFRLPAKRHTVNSEFDIKQISSLPQVDIAYSYGNVTDTAYKALAQNGAKALIHAGTGNGSVSSRLTPALQTLRKTGTQIIRSSHVNQGGFVLRNAEQPDDKNDWVVAHDLNPEKARILVELAMVKTQDSKELQRIFWEY</sequence>
<feature type="chain" id="PRO_0000171089" description="Glutaminase-asparaginase">
    <location>
        <begin position="1"/>
        <end position="337"/>
    </location>
</feature>
<feature type="domain" description="Asparaginase/glutaminase" evidence="2">
    <location>
        <begin position="10"/>
        <end position="337"/>
    </location>
</feature>
<feature type="active site" description="Acyl-ester intermediate" evidence="3 4 5">
    <location>
        <position position="20"/>
    </location>
</feature>
<feature type="binding site" evidence="1">
    <location>
        <position position="67"/>
    </location>
    <ligand>
        <name>substrate</name>
    </ligand>
</feature>
<feature type="binding site" evidence="1">
    <location>
        <begin position="100"/>
        <end position="101"/>
    </location>
    <ligand>
        <name>substrate</name>
    </ligand>
</feature>
<feature type="sequence conflict" description="In Ref. 2; AA sequence." evidence="6" ref="2">
    <original>Q</original>
    <variation>H</variation>
    <location>
        <position position="7"/>
    </location>
</feature>
<feature type="sequence conflict" description="In Ref. 2; AA sequence." evidence="6" ref="2">
    <original>V</original>
    <variation>R</variation>
    <location>
        <position position="12"/>
    </location>
</feature>
<feature type="strand" evidence="9">
    <location>
        <begin position="11"/>
        <end position="19"/>
    </location>
</feature>
<feature type="helix" evidence="9">
    <location>
        <begin position="20"/>
        <end position="22"/>
    </location>
</feature>
<feature type="strand" evidence="8">
    <location>
        <begin position="26"/>
        <end position="29"/>
    </location>
</feature>
<feature type="strand" evidence="9">
    <location>
        <begin position="31"/>
        <end position="37"/>
    </location>
</feature>
<feature type="helix" evidence="9">
    <location>
        <begin position="41"/>
        <end position="46"/>
    </location>
</feature>
<feature type="helix" evidence="9">
    <location>
        <begin position="51"/>
        <end position="54"/>
    </location>
</feature>
<feature type="strand" evidence="9">
    <location>
        <begin position="56"/>
        <end position="65"/>
    </location>
</feature>
<feature type="helix" evidence="9">
    <location>
        <begin position="67"/>
        <end position="69"/>
    </location>
</feature>
<feature type="helix" evidence="9">
    <location>
        <begin position="72"/>
        <end position="87"/>
    </location>
</feature>
<feature type="strand" evidence="9">
    <location>
        <begin position="92"/>
        <end position="97"/>
    </location>
</feature>
<feature type="helix" evidence="7">
    <location>
        <begin position="100"/>
        <end position="102"/>
    </location>
</feature>
<feature type="helix" evidence="9">
    <location>
        <begin position="103"/>
        <end position="113"/>
    </location>
</feature>
<feature type="strand" evidence="9">
    <location>
        <begin position="120"/>
        <end position="123"/>
    </location>
</feature>
<feature type="helix" evidence="9">
    <location>
        <begin position="136"/>
        <end position="147"/>
    </location>
</feature>
<feature type="helix" evidence="9">
    <location>
        <begin position="150"/>
        <end position="152"/>
    </location>
</feature>
<feature type="strand" evidence="9">
    <location>
        <begin position="157"/>
        <end position="159"/>
    </location>
</feature>
<feature type="strand" evidence="9">
    <location>
        <begin position="164"/>
        <end position="167"/>
    </location>
</feature>
<feature type="turn" evidence="9">
    <location>
        <begin position="168"/>
        <end position="170"/>
    </location>
</feature>
<feature type="strand" evidence="8">
    <location>
        <begin position="171"/>
        <end position="173"/>
    </location>
</feature>
<feature type="strand" evidence="9">
    <location>
        <begin position="175"/>
        <end position="178"/>
    </location>
</feature>
<feature type="strand" evidence="8">
    <location>
        <begin position="182"/>
        <end position="184"/>
    </location>
</feature>
<feature type="strand" evidence="9">
    <location>
        <begin position="189"/>
        <end position="193"/>
    </location>
</feature>
<feature type="strand" evidence="9">
    <location>
        <begin position="196"/>
        <end position="199"/>
    </location>
</feature>
<feature type="strand" evidence="8">
    <location>
        <begin position="201"/>
        <end position="203"/>
    </location>
</feature>
<feature type="helix" evidence="9">
    <location>
        <begin position="208"/>
        <end position="210"/>
    </location>
</feature>
<feature type="helix" evidence="9">
    <location>
        <begin position="215"/>
        <end position="217"/>
    </location>
</feature>
<feature type="strand" evidence="9">
    <location>
        <begin position="224"/>
        <end position="228"/>
    </location>
</feature>
<feature type="helix" evidence="9">
    <location>
        <begin position="236"/>
        <end position="243"/>
    </location>
</feature>
<feature type="strand" evidence="9">
    <location>
        <begin position="247"/>
        <end position="254"/>
    </location>
</feature>
<feature type="turn" evidence="9">
    <location>
        <begin position="255"/>
        <end position="257"/>
    </location>
</feature>
<feature type="turn" evidence="9">
    <location>
        <begin position="261"/>
        <end position="263"/>
    </location>
</feature>
<feature type="helix" evidence="9">
    <location>
        <begin position="264"/>
        <end position="272"/>
    </location>
</feature>
<feature type="strand" evidence="9">
    <location>
        <begin position="276"/>
        <end position="282"/>
    </location>
</feature>
<feature type="turn" evidence="9">
    <location>
        <begin position="291"/>
        <end position="293"/>
    </location>
</feature>
<feature type="helix" evidence="9">
    <location>
        <begin position="297"/>
        <end position="300"/>
    </location>
</feature>
<feature type="helix" evidence="9">
    <location>
        <begin position="310"/>
        <end position="320"/>
    </location>
</feature>
<feature type="turn" evidence="9">
    <location>
        <begin position="321"/>
        <end position="323"/>
    </location>
</feature>
<feature type="helix" evidence="9">
    <location>
        <begin position="327"/>
        <end position="336"/>
    </location>
</feature>
<accession>P10182</accession>
<dbReference type="EC" id="3.5.1.38"/>
<dbReference type="PDB" id="1DJO">
    <property type="method" value="X-ray"/>
    <property type="resolution" value="2.00 A"/>
    <property type="chains" value="A/B=8-337"/>
</dbReference>
<dbReference type="PDB" id="1DJP">
    <property type="method" value="X-ray"/>
    <property type="resolution" value="1.90 A"/>
    <property type="chains" value="A/B=8-337"/>
</dbReference>
<dbReference type="PDB" id="3PGA">
    <property type="method" value="X-ray"/>
    <property type="resolution" value="2.00 A"/>
    <property type="chains" value="1/2/3/4=8-337"/>
</dbReference>
<dbReference type="PDB" id="4PGA">
    <property type="method" value="X-ray"/>
    <property type="resolution" value="1.70 A"/>
    <property type="chains" value="A/B=1-337"/>
</dbReference>
<dbReference type="PDBsum" id="1DJO"/>
<dbReference type="PDBsum" id="1DJP"/>
<dbReference type="PDBsum" id="3PGA"/>
<dbReference type="PDBsum" id="4PGA"/>
<dbReference type="SMR" id="P10182"/>
<dbReference type="BRENDA" id="3.5.1.38">
    <property type="organism ID" value="5085"/>
</dbReference>
<dbReference type="EvolutionaryTrace" id="P10182"/>
<dbReference type="GO" id="GO:0042597">
    <property type="term" value="C:periplasmic space"/>
    <property type="evidence" value="ECO:0007669"/>
    <property type="project" value="UniProtKB-SubCell"/>
</dbReference>
<dbReference type="GO" id="GO:0004067">
    <property type="term" value="F:asparaginase activity"/>
    <property type="evidence" value="ECO:0007669"/>
    <property type="project" value="InterPro"/>
</dbReference>
<dbReference type="GO" id="GO:0050417">
    <property type="term" value="F:glutamin-(asparagin-)ase activity"/>
    <property type="evidence" value="ECO:0007669"/>
    <property type="project" value="UniProtKB-EC"/>
</dbReference>
<dbReference type="GO" id="GO:0004359">
    <property type="term" value="F:glutaminase activity"/>
    <property type="evidence" value="ECO:0007669"/>
    <property type="project" value="RHEA"/>
</dbReference>
<dbReference type="GO" id="GO:0006528">
    <property type="term" value="P:asparagine metabolic process"/>
    <property type="evidence" value="ECO:0007669"/>
    <property type="project" value="InterPro"/>
</dbReference>
<dbReference type="CDD" id="cd00411">
    <property type="entry name" value="L-asparaginase_like"/>
    <property type="match status" value="1"/>
</dbReference>
<dbReference type="FunFam" id="3.40.50.1170:FF:000001">
    <property type="entry name" value="L-asparaginase 2"/>
    <property type="match status" value="1"/>
</dbReference>
<dbReference type="Gene3D" id="3.40.50.40">
    <property type="match status" value="1"/>
</dbReference>
<dbReference type="Gene3D" id="3.40.50.1170">
    <property type="entry name" value="L-asparaginase, N-terminal domain"/>
    <property type="match status" value="1"/>
</dbReference>
<dbReference type="InterPro" id="IPR004550">
    <property type="entry name" value="AsnASE_II"/>
</dbReference>
<dbReference type="InterPro" id="IPR036152">
    <property type="entry name" value="Asp/glu_Ase-like_sf"/>
</dbReference>
<dbReference type="InterPro" id="IPR006034">
    <property type="entry name" value="Asparaginase/glutaminase-like"/>
</dbReference>
<dbReference type="InterPro" id="IPR020827">
    <property type="entry name" value="Asparaginase/glutaminase_AS1"/>
</dbReference>
<dbReference type="InterPro" id="IPR027475">
    <property type="entry name" value="Asparaginase/glutaminase_AS2"/>
</dbReference>
<dbReference type="InterPro" id="IPR040919">
    <property type="entry name" value="Asparaginase_C"/>
</dbReference>
<dbReference type="InterPro" id="IPR027473">
    <property type="entry name" value="L-asparaginase_C"/>
</dbReference>
<dbReference type="InterPro" id="IPR027474">
    <property type="entry name" value="L-asparaginase_N"/>
</dbReference>
<dbReference type="InterPro" id="IPR037152">
    <property type="entry name" value="L-asparaginase_N_sf"/>
</dbReference>
<dbReference type="NCBIfam" id="TIGR00520">
    <property type="entry name" value="asnASE_II"/>
    <property type="match status" value="1"/>
</dbReference>
<dbReference type="PANTHER" id="PTHR11707:SF28">
    <property type="entry name" value="60 KDA LYSOPHOSPHOLIPASE"/>
    <property type="match status" value="1"/>
</dbReference>
<dbReference type="PANTHER" id="PTHR11707">
    <property type="entry name" value="L-ASPARAGINASE"/>
    <property type="match status" value="1"/>
</dbReference>
<dbReference type="Pfam" id="PF00710">
    <property type="entry name" value="Asparaginase"/>
    <property type="match status" value="1"/>
</dbReference>
<dbReference type="Pfam" id="PF17763">
    <property type="entry name" value="Asparaginase_C"/>
    <property type="match status" value="1"/>
</dbReference>
<dbReference type="PIRSF" id="PIRSF001220">
    <property type="entry name" value="L-ASNase_gatD"/>
    <property type="match status" value="1"/>
</dbReference>
<dbReference type="PIRSF" id="PIRSF500176">
    <property type="entry name" value="L_ASNase"/>
    <property type="match status" value="1"/>
</dbReference>
<dbReference type="PRINTS" id="PR00139">
    <property type="entry name" value="ASNGLNASE"/>
</dbReference>
<dbReference type="SMART" id="SM00870">
    <property type="entry name" value="Asparaginase"/>
    <property type="match status" value="1"/>
</dbReference>
<dbReference type="SUPFAM" id="SSF53774">
    <property type="entry name" value="Glutaminase/Asparaginase"/>
    <property type="match status" value="1"/>
</dbReference>
<dbReference type="PROSITE" id="PS00144">
    <property type="entry name" value="ASN_GLN_ASE_1"/>
    <property type="match status" value="1"/>
</dbReference>
<dbReference type="PROSITE" id="PS00917">
    <property type="entry name" value="ASN_GLN_ASE_2"/>
    <property type="match status" value="1"/>
</dbReference>
<dbReference type="PROSITE" id="PS51732">
    <property type="entry name" value="ASN_GLN_ASE_3"/>
    <property type="match status" value="1"/>
</dbReference>
<protein>
    <recommendedName>
        <fullName>Glutaminase-asparaginase</fullName>
        <ecNumber>3.5.1.38</ecNumber>
    </recommendedName>
    <alternativeName>
        <fullName>L-ASNase/L-GLNase</fullName>
    </alternativeName>
    <alternativeName>
        <fullName>L-asparagine/L-glutamine amidohydrolase</fullName>
        <shortName>PGA</shortName>
    </alternativeName>
</protein>
<evidence type="ECO:0000250" key="1"/>
<evidence type="ECO:0000255" key="2">
    <source>
        <dbReference type="PROSITE-ProRule" id="PRU01068"/>
    </source>
</evidence>
<evidence type="ECO:0000255" key="3">
    <source>
        <dbReference type="PROSITE-ProRule" id="PRU10099"/>
    </source>
</evidence>
<evidence type="ECO:0000255" key="4">
    <source>
        <dbReference type="PROSITE-ProRule" id="PRU10100"/>
    </source>
</evidence>
<evidence type="ECO:0000269" key="5">
    <source>
    </source>
</evidence>
<evidence type="ECO:0000305" key="6"/>
<evidence type="ECO:0007829" key="7">
    <source>
        <dbReference type="PDB" id="1DJP"/>
    </source>
</evidence>
<evidence type="ECO:0007829" key="8">
    <source>
        <dbReference type="PDB" id="3PGA"/>
    </source>
</evidence>
<evidence type="ECO:0007829" key="9">
    <source>
        <dbReference type="PDB" id="4PGA"/>
    </source>
</evidence>
<organism>
    <name type="scientific">Pseudomonas sp. (strain ATCC 29598 / 7A)</name>
    <dbReference type="NCBI Taxonomy" id="313"/>
    <lineage>
        <taxon>Bacteria</taxon>
        <taxon>Pseudomonadati</taxon>
        <taxon>Pseudomonadota</taxon>
    </lineage>
</organism>